<keyword id="KW-0131">Cell cycle</keyword>
<keyword id="KW-0132">Cell division</keyword>
<keyword id="KW-0143">Chaperone</keyword>
<keyword id="KW-0963">Cytoplasm</keyword>
<keyword id="KW-0413">Isomerase</keyword>
<keyword id="KW-0697">Rotamase</keyword>
<proteinExistence type="inferred from homology"/>
<reference key="1">
    <citation type="journal article" date="2006" name="Genome Res.">
        <title>Skewed genomic variability in strains of the toxigenic bacterial pathogen, Clostridium perfringens.</title>
        <authorList>
            <person name="Myers G.S.A."/>
            <person name="Rasko D.A."/>
            <person name="Cheung J.K."/>
            <person name="Ravel J."/>
            <person name="Seshadri R."/>
            <person name="DeBoy R.T."/>
            <person name="Ren Q."/>
            <person name="Varga J."/>
            <person name="Awad M.M."/>
            <person name="Brinkac L.M."/>
            <person name="Daugherty S.C."/>
            <person name="Haft D.H."/>
            <person name="Dodson R.J."/>
            <person name="Madupu R."/>
            <person name="Nelson W.C."/>
            <person name="Rosovitz M.J."/>
            <person name="Sullivan S.A."/>
            <person name="Khouri H."/>
            <person name="Dimitrov G.I."/>
            <person name="Watkins K.L."/>
            <person name="Mulligan S."/>
            <person name="Benton J."/>
            <person name="Radune D."/>
            <person name="Fisher D.J."/>
            <person name="Atkins H.S."/>
            <person name="Hiscox T."/>
            <person name="Jost B.H."/>
            <person name="Billington S.J."/>
            <person name="Songer J.G."/>
            <person name="McClane B.A."/>
            <person name="Titball R.W."/>
            <person name="Rood J.I."/>
            <person name="Melville S.B."/>
            <person name="Paulsen I.T."/>
        </authorList>
    </citation>
    <scope>NUCLEOTIDE SEQUENCE [LARGE SCALE GENOMIC DNA]</scope>
    <source>
        <strain>ATCC 13124 / DSM 756 / JCM 1290 / NCIMB 6125 / NCTC 8237 / S 107 / Type A</strain>
    </source>
</reference>
<feature type="chain" id="PRO_0000256545" description="Trigger factor">
    <location>
        <begin position="1"/>
        <end position="428"/>
    </location>
</feature>
<feature type="domain" description="PPIase FKBP-type" evidence="1">
    <location>
        <begin position="163"/>
        <end position="248"/>
    </location>
</feature>
<name>TIG_CLOP1</name>
<evidence type="ECO:0000255" key="1">
    <source>
        <dbReference type="HAMAP-Rule" id="MF_00303"/>
    </source>
</evidence>
<protein>
    <recommendedName>
        <fullName evidence="1">Trigger factor</fullName>
        <shortName evidence="1">TF</shortName>
        <ecNumber evidence="1">5.2.1.8</ecNumber>
    </recommendedName>
    <alternativeName>
        <fullName evidence="1">PPIase</fullName>
    </alternativeName>
</protein>
<gene>
    <name evidence="1" type="primary">tig</name>
    <name type="ordered locus">CPF_1648</name>
</gene>
<dbReference type="EC" id="5.2.1.8" evidence="1"/>
<dbReference type="EMBL" id="CP000246">
    <property type="protein sequence ID" value="ABG83832.1"/>
    <property type="molecule type" value="Genomic_DNA"/>
</dbReference>
<dbReference type="RefSeq" id="WP_003460760.1">
    <property type="nucleotide sequence ID" value="NC_008261.1"/>
</dbReference>
<dbReference type="SMR" id="Q0TQK1"/>
<dbReference type="STRING" id="195103.CPF_1648"/>
<dbReference type="PaxDb" id="195103-CPF_1648"/>
<dbReference type="GeneID" id="93002064"/>
<dbReference type="KEGG" id="cpf:CPF_1648"/>
<dbReference type="eggNOG" id="COG0544">
    <property type="taxonomic scope" value="Bacteria"/>
</dbReference>
<dbReference type="HOGENOM" id="CLU_033058_3_2_9"/>
<dbReference type="Proteomes" id="UP000001823">
    <property type="component" value="Chromosome"/>
</dbReference>
<dbReference type="GO" id="GO:0005737">
    <property type="term" value="C:cytoplasm"/>
    <property type="evidence" value="ECO:0007669"/>
    <property type="project" value="UniProtKB-SubCell"/>
</dbReference>
<dbReference type="GO" id="GO:0003755">
    <property type="term" value="F:peptidyl-prolyl cis-trans isomerase activity"/>
    <property type="evidence" value="ECO:0007669"/>
    <property type="project" value="UniProtKB-UniRule"/>
</dbReference>
<dbReference type="GO" id="GO:0044183">
    <property type="term" value="F:protein folding chaperone"/>
    <property type="evidence" value="ECO:0007669"/>
    <property type="project" value="TreeGrafter"/>
</dbReference>
<dbReference type="GO" id="GO:0043022">
    <property type="term" value="F:ribosome binding"/>
    <property type="evidence" value="ECO:0007669"/>
    <property type="project" value="TreeGrafter"/>
</dbReference>
<dbReference type="GO" id="GO:0051083">
    <property type="term" value="P:'de novo' cotranslational protein folding"/>
    <property type="evidence" value="ECO:0007669"/>
    <property type="project" value="TreeGrafter"/>
</dbReference>
<dbReference type="GO" id="GO:0051301">
    <property type="term" value="P:cell division"/>
    <property type="evidence" value="ECO:0007669"/>
    <property type="project" value="UniProtKB-KW"/>
</dbReference>
<dbReference type="GO" id="GO:0061077">
    <property type="term" value="P:chaperone-mediated protein folding"/>
    <property type="evidence" value="ECO:0007669"/>
    <property type="project" value="TreeGrafter"/>
</dbReference>
<dbReference type="GO" id="GO:0015031">
    <property type="term" value="P:protein transport"/>
    <property type="evidence" value="ECO:0007669"/>
    <property type="project" value="UniProtKB-UniRule"/>
</dbReference>
<dbReference type="GO" id="GO:0043335">
    <property type="term" value="P:protein unfolding"/>
    <property type="evidence" value="ECO:0007669"/>
    <property type="project" value="TreeGrafter"/>
</dbReference>
<dbReference type="FunFam" id="3.10.50.40:FF:000001">
    <property type="entry name" value="Trigger factor"/>
    <property type="match status" value="1"/>
</dbReference>
<dbReference type="Gene3D" id="3.10.50.40">
    <property type="match status" value="1"/>
</dbReference>
<dbReference type="Gene3D" id="3.30.70.1050">
    <property type="entry name" value="Trigger factor ribosome-binding domain"/>
    <property type="match status" value="1"/>
</dbReference>
<dbReference type="Gene3D" id="1.10.3120.10">
    <property type="entry name" value="Trigger factor, C-terminal domain"/>
    <property type="match status" value="1"/>
</dbReference>
<dbReference type="HAMAP" id="MF_00303">
    <property type="entry name" value="Trigger_factor_Tig"/>
    <property type="match status" value="1"/>
</dbReference>
<dbReference type="InterPro" id="IPR046357">
    <property type="entry name" value="PPIase_dom_sf"/>
</dbReference>
<dbReference type="InterPro" id="IPR001179">
    <property type="entry name" value="PPIase_FKBP_dom"/>
</dbReference>
<dbReference type="InterPro" id="IPR005215">
    <property type="entry name" value="Trig_fac"/>
</dbReference>
<dbReference type="InterPro" id="IPR008880">
    <property type="entry name" value="Trigger_fac_C"/>
</dbReference>
<dbReference type="InterPro" id="IPR037041">
    <property type="entry name" value="Trigger_fac_C_sf"/>
</dbReference>
<dbReference type="InterPro" id="IPR008881">
    <property type="entry name" value="Trigger_fac_ribosome-bd_bac"/>
</dbReference>
<dbReference type="InterPro" id="IPR036611">
    <property type="entry name" value="Trigger_fac_ribosome-bd_sf"/>
</dbReference>
<dbReference type="InterPro" id="IPR027304">
    <property type="entry name" value="Trigger_fact/SurA_dom_sf"/>
</dbReference>
<dbReference type="NCBIfam" id="TIGR00115">
    <property type="entry name" value="tig"/>
    <property type="match status" value="1"/>
</dbReference>
<dbReference type="PANTHER" id="PTHR30560">
    <property type="entry name" value="TRIGGER FACTOR CHAPERONE AND PEPTIDYL-PROLYL CIS/TRANS ISOMERASE"/>
    <property type="match status" value="1"/>
</dbReference>
<dbReference type="PANTHER" id="PTHR30560:SF3">
    <property type="entry name" value="TRIGGER FACTOR-LIKE PROTEIN TIG, CHLOROPLASTIC"/>
    <property type="match status" value="1"/>
</dbReference>
<dbReference type="Pfam" id="PF00254">
    <property type="entry name" value="FKBP_C"/>
    <property type="match status" value="1"/>
</dbReference>
<dbReference type="Pfam" id="PF05698">
    <property type="entry name" value="Trigger_C"/>
    <property type="match status" value="1"/>
</dbReference>
<dbReference type="Pfam" id="PF05697">
    <property type="entry name" value="Trigger_N"/>
    <property type="match status" value="1"/>
</dbReference>
<dbReference type="PIRSF" id="PIRSF003095">
    <property type="entry name" value="Trigger_factor"/>
    <property type="match status" value="1"/>
</dbReference>
<dbReference type="SUPFAM" id="SSF54534">
    <property type="entry name" value="FKBP-like"/>
    <property type="match status" value="1"/>
</dbReference>
<dbReference type="SUPFAM" id="SSF109998">
    <property type="entry name" value="Triger factor/SurA peptide-binding domain-like"/>
    <property type="match status" value="1"/>
</dbReference>
<dbReference type="SUPFAM" id="SSF102735">
    <property type="entry name" value="Trigger factor ribosome-binding domain"/>
    <property type="match status" value="1"/>
</dbReference>
<dbReference type="PROSITE" id="PS50059">
    <property type="entry name" value="FKBP_PPIASE"/>
    <property type="match status" value="1"/>
</dbReference>
<comment type="function">
    <text evidence="1">Involved in protein export. Acts as a chaperone by maintaining the newly synthesized protein in an open conformation. Functions as a peptidyl-prolyl cis-trans isomerase.</text>
</comment>
<comment type="catalytic activity">
    <reaction evidence="1">
        <text>[protein]-peptidylproline (omega=180) = [protein]-peptidylproline (omega=0)</text>
        <dbReference type="Rhea" id="RHEA:16237"/>
        <dbReference type="Rhea" id="RHEA-COMP:10747"/>
        <dbReference type="Rhea" id="RHEA-COMP:10748"/>
        <dbReference type="ChEBI" id="CHEBI:83833"/>
        <dbReference type="ChEBI" id="CHEBI:83834"/>
        <dbReference type="EC" id="5.2.1.8"/>
    </reaction>
</comment>
<comment type="subcellular location">
    <subcellularLocation>
        <location>Cytoplasm</location>
    </subcellularLocation>
    <text evidence="1">About half TF is bound to the ribosome near the polypeptide exit tunnel while the other half is free in the cytoplasm.</text>
</comment>
<comment type="domain">
    <text evidence="1">Consists of 3 domains; the N-terminus binds the ribosome, the middle domain has PPIase activity, while the C-terminus has intrinsic chaperone activity on its own.</text>
</comment>
<comment type="similarity">
    <text evidence="1">Belongs to the FKBP-type PPIase family. Tig subfamily.</text>
</comment>
<sequence length="428" mass="48361">MEAKMNKIDTNVVELEIKVDAKDFNEALKKSYNKNSKKFNIPGFRKGKVPMNMVKKFYGVEVLFDDAINACIDKTYGVALEENNVRPVDYPQIEVVEVGEGKDLVYKAKVTTYPEVTLGDYKGLEVEEVSYEVKEEDIEKQLADMQARNARVETKEEGTVENGNIAVIDFKGFIDDVAFEGGEGKDYPLEIGSGSFIDNFEEQLVGLKVGESKDVNVTFPEAYGKEDLNGKPAKFEVTVKEIKVKELPALDDEFAKEVSEFDTLEELKADLKEKAVKANELRAKREMEEKVINAVVDNAKVEIPEAMINREVENMVRDLEMRLGQQGLSLEQYYEFTGSTEDKMKSYMKENAERKVKTDLVMSAVTEAEAIEATEEELKAKAEEVAKMYSNGAETEKMVDLLLNAQRAALELDVKREKTLKMLFESLK</sequence>
<accession>Q0TQK1</accession>
<organism>
    <name type="scientific">Clostridium perfringens (strain ATCC 13124 / DSM 756 / JCM 1290 / NCIMB 6125 / NCTC 8237 / Type A)</name>
    <dbReference type="NCBI Taxonomy" id="195103"/>
    <lineage>
        <taxon>Bacteria</taxon>
        <taxon>Bacillati</taxon>
        <taxon>Bacillota</taxon>
        <taxon>Clostridia</taxon>
        <taxon>Eubacteriales</taxon>
        <taxon>Clostridiaceae</taxon>
        <taxon>Clostridium</taxon>
    </lineage>
</organism>